<organism>
    <name type="scientific">Xenopus laevis</name>
    <name type="common">African clawed frog</name>
    <dbReference type="NCBI Taxonomy" id="8355"/>
    <lineage>
        <taxon>Eukaryota</taxon>
        <taxon>Metazoa</taxon>
        <taxon>Chordata</taxon>
        <taxon>Craniata</taxon>
        <taxon>Vertebrata</taxon>
        <taxon>Euteleostomi</taxon>
        <taxon>Amphibia</taxon>
        <taxon>Batrachia</taxon>
        <taxon>Anura</taxon>
        <taxon>Pipoidea</taxon>
        <taxon>Pipidae</taxon>
        <taxon>Xenopodinae</taxon>
        <taxon>Xenopus</taxon>
        <taxon>Xenopus</taxon>
    </lineage>
</organism>
<proteinExistence type="inferred from homology"/>
<dbReference type="PIR" id="S00833">
    <property type="entry name" value="S00833"/>
</dbReference>
<dbReference type="SMR" id="P18745"/>
<dbReference type="Proteomes" id="UP000186698">
    <property type="component" value="Unplaced"/>
</dbReference>
<dbReference type="GO" id="GO:0005634">
    <property type="term" value="C:nucleus"/>
    <property type="evidence" value="ECO:0000318"/>
    <property type="project" value="GO_Central"/>
</dbReference>
<dbReference type="GO" id="GO:0000981">
    <property type="term" value="F:DNA-binding transcription factor activity, RNA polymerase II-specific"/>
    <property type="evidence" value="ECO:0000318"/>
    <property type="project" value="GO_Central"/>
</dbReference>
<dbReference type="GO" id="GO:0000978">
    <property type="term" value="F:RNA polymerase II cis-regulatory region sequence-specific DNA binding"/>
    <property type="evidence" value="ECO:0000318"/>
    <property type="project" value="GO_Central"/>
</dbReference>
<dbReference type="GO" id="GO:0008270">
    <property type="term" value="F:zinc ion binding"/>
    <property type="evidence" value="ECO:0007669"/>
    <property type="project" value="UniProtKB-KW"/>
</dbReference>
<dbReference type="GO" id="GO:0006357">
    <property type="term" value="P:regulation of transcription by RNA polymerase II"/>
    <property type="evidence" value="ECO:0000318"/>
    <property type="project" value="GO_Central"/>
</dbReference>
<dbReference type="FunFam" id="3.30.160.60:FF:003089">
    <property type="match status" value="1"/>
</dbReference>
<dbReference type="FunFam" id="3.30.160.60:FF:001480">
    <property type="entry name" value="Si:cabz01071911.3"/>
    <property type="match status" value="1"/>
</dbReference>
<dbReference type="FunFam" id="3.30.160.60:FF:000966">
    <property type="entry name" value="ZFP90 zinc finger protein"/>
    <property type="match status" value="1"/>
</dbReference>
<dbReference type="FunFam" id="3.30.160.60:FF:001155">
    <property type="entry name" value="Zinc finger 30C"/>
    <property type="match status" value="1"/>
</dbReference>
<dbReference type="FunFam" id="3.30.160.60:FF:001007">
    <property type="entry name" value="Zinc finger protein 1184"/>
    <property type="match status" value="4"/>
</dbReference>
<dbReference type="FunFam" id="3.30.160.60:FF:000812">
    <property type="entry name" value="zinc finger protein 23 isoform X2"/>
    <property type="match status" value="1"/>
</dbReference>
<dbReference type="FunFam" id="3.30.160.60:FF:002343">
    <property type="entry name" value="Zinc finger protein 33A"/>
    <property type="match status" value="1"/>
</dbReference>
<dbReference type="FunFam" id="3.30.160.60:FF:000936">
    <property type="entry name" value="Zinc finger protein 577"/>
    <property type="match status" value="1"/>
</dbReference>
<dbReference type="FunFam" id="3.30.160.60:FF:000710">
    <property type="entry name" value="Zinc finger protein 768"/>
    <property type="match status" value="1"/>
</dbReference>
<dbReference type="Gene3D" id="3.30.160.60">
    <property type="entry name" value="Classic Zinc Finger"/>
    <property type="match status" value="12"/>
</dbReference>
<dbReference type="InterPro" id="IPR050758">
    <property type="entry name" value="Znf_C2H2-type"/>
</dbReference>
<dbReference type="InterPro" id="IPR036236">
    <property type="entry name" value="Znf_C2H2_sf"/>
</dbReference>
<dbReference type="InterPro" id="IPR013087">
    <property type="entry name" value="Znf_C2H2_type"/>
</dbReference>
<dbReference type="PANTHER" id="PTHR23234:SF8">
    <property type="entry name" value="C2H2-TYPE DOMAIN-CONTAINING PROTEIN"/>
    <property type="match status" value="1"/>
</dbReference>
<dbReference type="PANTHER" id="PTHR23234">
    <property type="entry name" value="ZNF44 PROTEIN"/>
    <property type="match status" value="1"/>
</dbReference>
<dbReference type="Pfam" id="PF00096">
    <property type="entry name" value="zf-C2H2"/>
    <property type="match status" value="10"/>
</dbReference>
<dbReference type="SMART" id="SM00355">
    <property type="entry name" value="ZnF_C2H2"/>
    <property type="match status" value="12"/>
</dbReference>
<dbReference type="SUPFAM" id="SSF57667">
    <property type="entry name" value="beta-beta-alpha zinc fingers"/>
    <property type="match status" value="7"/>
</dbReference>
<dbReference type="PROSITE" id="PS00028">
    <property type="entry name" value="ZINC_FINGER_C2H2_1"/>
    <property type="match status" value="12"/>
</dbReference>
<dbReference type="PROSITE" id="PS50157">
    <property type="entry name" value="ZINC_FINGER_C2H2_2"/>
    <property type="match status" value="12"/>
</dbReference>
<feature type="chain" id="PRO_0000047820" description="Oocyte zinc finger protein XlCOF22">
    <location>
        <begin position="1"/>
        <end position="435"/>
    </location>
</feature>
<feature type="zinc finger region" description="C2H2-type 1" evidence="1">
    <location>
        <begin position="97"/>
        <end position="120"/>
    </location>
</feature>
<feature type="zinc finger region" description="C2H2-type 2" evidence="1">
    <location>
        <begin position="126"/>
        <end position="148"/>
    </location>
</feature>
<feature type="zinc finger region" description="C2H2-type 3" evidence="1">
    <location>
        <begin position="154"/>
        <end position="176"/>
    </location>
</feature>
<feature type="zinc finger region" description="C2H2-type 4" evidence="1">
    <location>
        <begin position="182"/>
        <end position="204"/>
    </location>
</feature>
<feature type="zinc finger region" description="C2H2-type 5" evidence="1">
    <location>
        <begin position="210"/>
        <end position="232"/>
    </location>
</feature>
<feature type="zinc finger region" description="C2H2-type 6" evidence="1">
    <location>
        <begin position="238"/>
        <end position="260"/>
    </location>
</feature>
<feature type="zinc finger region" description="C2H2-type 7" evidence="1">
    <location>
        <begin position="266"/>
        <end position="288"/>
    </location>
</feature>
<feature type="zinc finger region" description="C2H2-type 8" evidence="1">
    <location>
        <begin position="294"/>
        <end position="316"/>
    </location>
</feature>
<feature type="zinc finger region" description="C2H2-type 9" evidence="1">
    <location>
        <begin position="322"/>
        <end position="345"/>
    </location>
</feature>
<feature type="zinc finger region" description="C2H2-type 10" evidence="1">
    <location>
        <begin position="351"/>
        <end position="373"/>
    </location>
</feature>
<feature type="zinc finger region" description="C2H2-type 11" evidence="1">
    <location>
        <begin position="379"/>
        <end position="402"/>
    </location>
</feature>
<feature type="zinc finger region" description="C2H2-type 12" evidence="1">
    <location>
        <begin position="408"/>
        <end position="430"/>
    </location>
</feature>
<feature type="region of interest" description="Disordered" evidence="2">
    <location>
        <begin position="71"/>
        <end position="92"/>
    </location>
</feature>
<feature type="compositionally biased region" description="Basic and acidic residues" evidence="2">
    <location>
        <begin position="80"/>
        <end position="91"/>
    </location>
</feature>
<keyword id="KW-0238">DNA-binding</keyword>
<keyword id="KW-0479">Metal-binding</keyword>
<keyword id="KW-0539">Nucleus</keyword>
<keyword id="KW-1185">Reference proteome</keyword>
<keyword id="KW-0677">Repeat</keyword>
<keyword id="KW-0804">Transcription</keyword>
<keyword id="KW-0805">Transcription regulation</keyword>
<keyword id="KW-0862">Zinc</keyword>
<keyword id="KW-0863">Zinc-finger</keyword>
<accession>P18745</accession>
<comment type="function">
    <text>May be involved in transcriptional regulation.</text>
</comment>
<comment type="subcellular location">
    <subcellularLocation>
        <location evidence="3">Nucleus</location>
    </subcellularLocation>
</comment>
<comment type="similarity">
    <text evidence="3">Belongs to the krueppel C2H2-type zinc-finger protein family.</text>
</comment>
<name>ZO22_XENLA</name>
<reference key="1">
    <citation type="journal article" date="1988" name="EMBO J.">
        <title>The finger motif defines a multigene family represented in the maternal mRNA of Xenopus laevis oocytes.</title>
        <authorList>
            <person name="Koester M."/>
            <person name="Pieler T."/>
            <person name="Poeting A."/>
            <person name="Knoechel W."/>
        </authorList>
    </citation>
    <scope>NUCLEOTIDE SEQUENCE</scope>
</reference>
<sequence>MGCSLNNNSQDDYVSFVIKEEEASCEEGNQSDCSINPLTEPIQGTDTPTPNMLYSLVRDFLKTNGNKYDENANTSAHFSRNRDSDKHERTHTGKKLHSCSQCGKCFSSSSDLLAHRRQSHTREKPFSCSECGKCFSFRSRLIDHQRTHTGEKPFCCFQCGKSFSVRSRFLDHRRTHTGEKPFSCLECGKCFLFRSRLLEHQRTHTGEKPFSCLKCGKCFSVRSRLKDHQRTHTGEKPFSCLECGKSFSFRPCLIDHQRTHTGEKPFSCFQCGKCFSFQSRLINHQRTHTGEKPFSCSECGKSFSNQSCLRVHQRTHTGEKPYSCSECGKSFVTSSQLAVHRRRTHTGEKPFSCSECGKCFSNQSCLRVHQRTHTGENLFSCSECGKSFVTSSKLASHQRQTHTGEKPVSCSECGKCFTRKRSLKVHFKIHTGGKP</sequence>
<protein>
    <recommendedName>
        <fullName>Oocyte zinc finger protein XlCOF22</fullName>
    </recommendedName>
</protein>
<evidence type="ECO:0000255" key="1">
    <source>
        <dbReference type="PROSITE-ProRule" id="PRU00042"/>
    </source>
</evidence>
<evidence type="ECO:0000256" key="2">
    <source>
        <dbReference type="SAM" id="MobiDB-lite"/>
    </source>
</evidence>
<evidence type="ECO:0000305" key="3"/>